<feature type="chain" id="PRO_1000061906" description="UPF0250 protein XC_0711">
    <location>
        <begin position="1"/>
        <end position="92"/>
    </location>
</feature>
<gene>
    <name type="ordered locus">XC_0711</name>
</gene>
<organism>
    <name type="scientific">Xanthomonas campestris pv. campestris (strain 8004)</name>
    <dbReference type="NCBI Taxonomy" id="314565"/>
    <lineage>
        <taxon>Bacteria</taxon>
        <taxon>Pseudomonadati</taxon>
        <taxon>Pseudomonadota</taxon>
        <taxon>Gammaproteobacteria</taxon>
        <taxon>Lysobacterales</taxon>
        <taxon>Lysobacteraceae</taxon>
        <taxon>Xanthomonas</taxon>
    </lineage>
</organism>
<name>Y711_XANC8</name>
<dbReference type="EMBL" id="CP000050">
    <property type="protein sequence ID" value="AAY47789.1"/>
    <property type="molecule type" value="Genomic_DNA"/>
</dbReference>
<dbReference type="RefSeq" id="WP_011038551.1">
    <property type="nucleotide sequence ID" value="NZ_CP155948.1"/>
</dbReference>
<dbReference type="SMR" id="Q4UYT4"/>
<dbReference type="KEGG" id="xcb:XC_0711"/>
<dbReference type="HOGENOM" id="CLU_161438_1_1_6"/>
<dbReference type="Proteomes" id="UP000000420">
    <property type="component" value="Chromosome"/>
</dbReference>
<dbReference type="Gene3D" id="3.30.70.260">
    <property type="match status" value="1"/>
</dbReference>
<dbReference type="HAMAP" id="MF_00659">
    <property type="entry name" value="UPF0250"/>
    <property type="match status" value="1"/>
</dbReference>
<dbReference type="InterPro" id="IPR007454">
    <property type="entry name" value="UPF0250_YbeD-like"/>
</dbReference>
<dbReference type="InterPro" id="IPR027471">
    <property type="entry name" value="YbeD-like_sf"/>
</dbReference>
<dbReference type="NCBIfam" id="NF002066">
    <property type="entry name" value="PRK00907.1"/>
    <property type="match status" value="1"/>
</dbReference>
<dbReference type="Pfam" id="PF04359">
    <property type="entry name" value="DUF493"/>
    <property type="match status" value="1"/>
</dbReference>
<dbReference type="SUPFAM" id="SSF117991">
    <property type="entry name" value="YbeD/HP0495-like"/>
    <property type="match status" value="1"/>
</dbReference>
<reference key="1">
    <citation type="journal article" date="2005" name="Genome Res.">
        <title>Comparative and functional genomic analyses of the pathogenicity of phytopathogen Xanthomonas campestris pv. campestris.</title>
        <authorList>
            <person name="Qian W."/>
            <person name="Jia Y."/>
            <person name="Ren S.-X."/>
            <person name="He Y.-Q."/>
            <person name="Feng J.-X."/>
            <person name="Lu L.-F."/>
            <person name="Sun Q."/>
            <person name="Ying G."/>
            <person name="Tang D.-J."/>
            <person name="Tang H."/>
            <person name="Wu W."/>
            <person name="Hao P."/>
            <person name="Wang L."/>
            <person name="Jiang B.-L."/>
            <person name="Zeng S."/>
            <person name="Gu W.-Y."/>
            <person name="Lu G."/>
            <person name="Rong L."/>
            <person name="Tian Y."/>
            <person name="Yao Z."/>
            <person name="Fu G."/>
            <person name="Chen B."/>
            <person name="Fang R."/>
            <person name="Qiang B."/>
            <person name="Chen Z."/>
            <person name="Zhao G.-P."/>
            <person name="Tang J.-L."/>
            <person name="He C."/>
        </authorList>
    </citation>
    <scope>NUCLEOTIDE SEQUENCE [LARGE SCALE GENOMIC DNA]</scope>
    <source>
        <strain>8004</strain>
    </source>
</reference>
<sequence>MEISSDNPDHGFQFPGTFELSAMGTAERGLETELPRLLAATGVELLEESISWKHSSSGKYVSVRIGFRADTREQFDSAHQALREHPEVKWTL</sequence>
<comment type="similarity">
    <text evidence="1">Belongs to the UPF0250 family.</text>
</comment>
<evidence type="ECO:0000255" key="1">
    <source>
        <dbReference type="HAMAP-Rule" id="MF_00659"/>
    </source>
</evidence>
<accession>Q4UYT4</accession>
<proteinExistence type="inferred from homology"/>
<protein>
    <recommendedName>
        <fullName evidence="1">UPF0250 protein XC_0711</fullName>
    </recommendedName>
</protein>